<name>LEPA_BURMS</name>
<sequence>MDHIRNFSIIAHIDHGKSTLADRIIQLCGGLSDREMESQVLDSMDLERERGITIKAQTAALTYRARDGKVYNLNLIDTPGHVDFSYEVSRSLSACEGALLVVDASQGVEAQTVANCYTAIELGVEVVPVLNKIDLPAANPENAIAEIEDVIGIDAMDAVRCSAKTGLGVEDVLESLIAKVPPPKGDPDAPLQALIIDSWFDNYVGVVMLVRIVNGTLRPKERIKLMATDAQYAVEHVGVFTPKSRNLESLSAGQVGFIISGIKELTAAKVGDTVTHATKPAPEPLPGFKEVKPQVFAGLYPVEANQYDALRESLEKLKLNDASLQYEPEVSQALGFGFRCGFLGLLHMEIVQERLEREFDMDLITTAPTVVYEVVQSDGTTIMVENPAKMPEPARIAEIREPIVTVNLYMPQDYVGSVITLCEQKRGTQINMQYHGRQVQLTYEIPMAEIVLDFFDRLKSVSRGYASMDYEFKEYRTSDVVKVDMLINGDKVDALSIIVHRSQSQYRGREVAAKMREIIPRQMYDVAIQAAIGAHIIARENIKALRKNVLAKCYGGDITRKKKLLEKQKEGKKRMKQVGSVEIPQEAFLAILRVEDK</sequence>
<accession>A1V6B9</accession>
<evidence type="ECO:0000255" key="1">
    <source>
        <dbReference type="HAMAP-Rule" id="MF_00071"/>
    </source>
</evidence>
<keyword id="KW-0997">Cell inner membrane</keyword>
<keyword id="KW-1003">Cell membrane</keyword>
<keyword id="KW-0342">GTP-binding</keyword>
<keyword id="KW-0378">Hydrolase</keyword>
<keyword id="KW-0472">Membrane</keyword>
<keyword id="KW-0547">Nucleotide-binding</keyword>
<keyword id="KW-0648">Protein biosynthesis</keyword>
<comment type="function">
    <text evidence="1">Required for accurate and efficient protein synthesis under certain stress conditions. May act as a fidelity factor of the translation reaction, by catalyzing a one-codon backward translocation of tRNAs on improperly translocated ribosomes. Back-translocation proceeds from a post-translocation (POST) complex to a pre-translocation (PRE) complex, thus giving elongation factor G a second chance to translocate the tRNAs correctly. Binds to ribosomes in a GTP-dependent manner.</text>
</comment>
<comment type="catalytic activity">
    <reaction evidence="1">
        <text>GTP + H2O = GDP + phosphate + H(+)</text>
        <dbReference type="Rhea" id="RHEA:19669"/>
        <dbReference type="ChEBI" id="CHEBI:15377"/>
        <dbReference type="ChEBI" id="CHEBI:15378"/>
        <dbReference type="ChEBI" id="CHEBI:37565"/>
        <dbReference type="ChEBI" id="CHEBI:43474"/>
        <dbReference type="ChEBI" id="CHEBI:58189"/>
        <dbReference type="EC" id="3.6.5.n1"/>
    </reaction>
</comment>
<comment type="subcellular location">
    <subcellularLocation>
        <location evidence="1">Cell inner membrane</location>
        <topology evidence="1">Peripheral membrane protein</topology>
        <orientation evidence="1">Cytoplasmic side</orientation>
    </subcellularLocation>
</comment>
<comment type="similarity">
    <text evidence="1">Belongs to the TRAFAC class translation factor GTPase superfamily. Classic translation factor GTPase family. LepA subfamily.</text>
</comment>
<feature type="chain" id="PRO_1000031976" description="Elongation factor 4">
    <location>
        <begin position="1"/>
        <end position="597"/>
    </location>
</feature>
<feature type="domain" description="tr-type G">
    <location>
        <begin position="2"/>
        <end position="184"/>
    </location>
</feature>
<feature type="binding site" evidence="1">
    <location>
        <begin position="14"/>
        <end position="19"/>
    </location>
    <ligand>
        <name>GTP</name>
        <dbReference type="ChEBI" id="CHEBI:37565"/>
    </ligand>
</feature>
<feature type="binding site" evidence="1">
    <location>
        <begin position="131"/>
        <end position="134"/>
    </location>
    <ligand>
        <name>GTP</name>
        <dbReference type="ChEBI" id="CHEBI:37565"/>
    </ligand>
</feature>
<dbReference type="EC" id="3.6.5.n1" evidence="1"/>
<dbReference type="EMBL" id="CP000526">
    <property type="protein sequence ID" value="ABM49590.1"/>
    <property type="molecule type" value="Genomic_DNA"/>
</dbReference>
<dbReference type="RefSeq" id="WP_004193305.1">
    <property type="nucleotide sequence ID" value="NC_008785.1"/>
</dbReference>
<dbReference type="SMR" id="A1V6B9"/>
<dbReference type="GeneID" id="93061011"/>
<dbReference type="KEGG" id="bmv:BMASAVP1_A2468"/>
<dbReference type="HOGENOM" id="CLU_009995_3_3_4"/>
<dbReference type="GO" id="GO:0005886">
    <property type="term" value="C:plasma membrane"/>
    <property type="evidence" value="ECO:0007669"/>
    <property type="project" value="UniProtKB-SubCell"/>
</dbReference>
<dbReference type="GO" id="GO:0005525">
    <property type="term" value="F:GTP binding"/>
    <property type="evidence" value="ECO:0007669"/>
    <property type="project" value="UniProtKB-UniRule"/>
</dbReference>
<dbReference type="GO" id="GO:0003924">
    <property type="term" value="F:GTPase activity"/>
    <property type="evidence" value="ECO:0007669"/>
    <property type="project" value="UniProtKB-UniRule"/>
</dbReference>
<dbReference type="GO" id="GO:0097216">
    <property type="term" value="F:guanosine tetraphosphate binding"/>
    <property type="evidence" value="ECO:0007669"/>
    <property type="project" value="UniProtKB-ARBA"/>
</dbReference>
<dbReference type="GO" id="GO:0043022">
    <property type="term" value="F:ribosome binding"/>
    <property type="evidence" value="ECO:0007669"/>
    <property type="project" value="UniProtKB-UniRule"/>
</dbReference>
<dbReference type="GO" id="GO:0003746">
    <property type="term" value="F:translation elongation factor activity"/>
    <property type="evidence" value="ECO:0007669"/>
    <property type="project" value="UniProtKB-UniRule"/>
</dbReference>
<dbReference type="GO" id="GO:0045727">
    <property type="term" value="P:positive regulation of translation"/>
    <property type="evidence" value="ECO:0007669"/>
    <property type="project" value="UniProtKB-UniRule"/>
</dbReference>
<dbReference type="CDD" id="cd03699">
    <property type="entry name" value="EF4_II"/>
    <property type="match status" value="1"/>
</dbReference>
<dbReference type="CDD" id="cd16260">
    <property type="entry name" value="EF4_III"/>
    <property type="match status" value="1"/>
</dbReference>
<dbReference type="CDD" id="cd01890">
    <property type="entry name" value="LepA"/>
    <property type="match status" value="1"/>
</dbReference>
<dbReference type="CDD" id="cd03709">
    <property type="entry name" value="lepA_C"/>
    <property type="match status" value="1"/>
</dbReference>
<dbReference type="FunFam" id="3.40.50.300:FF:000078">
    <property type="entry name" value="Elongation factor 4"/>
    <property type="match status" value="1"/>
</dbReference>
<dbReference type="FunFam" id="2.40.30.10:FF:000015">
    <property type="entry name" value="Translation factor GUF1, mitochondrial"/>
    <property type="match status" value="1"/>
</dbReference>
<dbReference type="FunFam" id="3.30.70.240:FF:000007">
    <property type="entry name" value="Translation factor GUF1, mitochondrial"/>
    <property type="match status" value="1"/>
</dbReference>
<dbReference type="FunFam" id="3.30.70.2570:FF:000001">
    <property type="entry name" value="Translation factor GUF1, mitochondrial"/>
    <property type="match status" value="1"/>
</dbReference>
<dbReference type="FunFam" id="3.30.70.870:FF:000004">
    <property type="entry name" value="Translation factor GUF1, mitochondrial"/>
    <property type="match status" value="1"/>
</dbReference>
<dbReference type="Gene3D" id="3.30.70.240">
    <property type="match status" value="1"/>
</dbReference>
<dbReference type="Gene3D" id="3.30.70.2570">
    <property type="entry name" value="Elongation factor 4, C-terminal domain"/>
    <property type="match status" value="1"/>
</dbReference>
<dbReference type="Gene3D" id="3.30.70.870">
    <property type="entry name" value="Elongation Factor G (Translational Gtpase), domain 3"/>
    <property type="match status" value="1"/>
</dbReference>
<dbReference type="Gene3D" id="3.40.50.300">
    <property type="entry name" value="P-loop containing nucleotide triphosphate hydrolases"/>
    <property type="match status" value="1"/>
</dbReference>
<dbReference type="Gene3D" id="2.40.30.10">
    <property type="entry name" value="Translation factors"/>
    <property type="match status" value="1"/>
</dbReference>
<dbReference type="HAMAP" id="MF_00071">
    <property type="entry name" value="LepA"/>
    <property type="match status" value="1"/>
</dbReference>
<dbReference type="InterPro" id="IPR006297">
    <property type="entry name" value="EF-4"/>
</dbReference>
<dbReference type="InterPro" id="IPR035647">
    <property type="entry name" value="EFG_III/V"/>
</dbReference>
<dbReference type="InterPro" id="IPR000640">
    <property type="entry name" value="EFG_V-like"/>
</dbReference>
<dbReference type="InterPro" id="IPR004161">
    <property type="entry name" value="EFTu-like_2"/>
</dbReference>
<dbReference type="InterPro" id="IPR031157">
    <property type="entry name" value="G_TR_CS"/>
</dbReference>
<dbReference type="InterPro" id="IPR038363">
    <property type="entry name" value="LepA_C_sf"/>
</dbReference>
<dbReference type="InterPro" id="IPR013842">
    <property type="entry name" value="LepA_CTD"/>
</dbReference>
<dbReference type="InterPro" id="IPR035654">
    <property type="entry name" value="LepA_IV"/>
</dbReference>
<dbReference type="InterPro" id="IPR027417">
    <property type="entry name" value="P-loop_NTPase"/>
</dbReference>
<dbReference type="InterPro" id="IPR005225">
    <property type="entry name" value="Small_GTP-bd"/>
</dbReference>
<dbReference type="InterPro" id="IPR000795">
    <property type="entry name" value="T_Tr_GTP-bd_dom"/>
</dbReference>
<dbReference type="InterPro" id="IPR009000">
    <property type="entry name" value="Transl_B-barrel_sf"/>
</dbReference>
<dbReference type="NCBIfam" id="TIGR01393">
    <property type="entry name" value="lepA"/>
    <property type="match status" value="1"/>
</dbReference>
<dbReference type="NCBIfam" id="TIGR00231">
    <property type="entry name" value="small_GTP"/>
    <property type="match status" value="1"/>
</dbReference>
<dbReference type="PANTHER" id="PTHR43512:SF4">
    <property type="entry name" value="TRANSLATION FACTOR GUF1 HOMOLOG, CHLOROPLASTIC"/>
    <property type="match status" value="1"/>
</dbReference>
<dbReference type="PANTHER" id="PTHR43512">
    <property type="entry name" value="TRANSLATION FACTOR GUF1-RELATED"/>
    <property type="match status" value="1"/>
</dbReference>
<dbReference type="Pfam" id="PF00679">
    <property type="entry name" value="EFG_C"/>
    <property type="match status" value="1"/>
</dbReference>
<dbReference type="Pfam" id="PF00009">
    <property type="entry name" value="GTP_EFTU"/>
    <property type="match status" value="1"/>
</dbReference>
<dbReference type="Pfam" id="PF03144">
    <property type="entry name" value="GTP_EFTU_D2"/>
    <property type="match status" value="1"/>
</dbReference>
<dbReference type="Pfam" id="PF06421">
    <property type="entry name" value="LepA_C"/>
    <property type="match status" value="1"/>
</dbReference>
<dbReference type="PRINTS" id="PR00315">
    <property type="entry name" value="ELONGATNFCT"/>
</dbReference>
<dbReference type="SMART" id="SM00838">
    <property type="entry name" value="EFG_C"/>
    <property type="match status" value="1"/>
</dbReference>
<dbReference type="SUPFAM" id="SSF54980">
    <property type="entry name" value="EF-G C-terminal domain-like"/>
    <property type="match status" value="2"/>
</dbReference>
<dbReference type="SUPFAM" id="SSF52540">
    <property type="entry name" value="P-loop containing nucleoside triphosphate hydrolases"/>
    <property type="match status" value="1"/>
</dbReference>
<dbReference type="SUPFAM" id="SSF50447">
    <property type="entry name" value="Translation proteins"/>
    <property type="match status" value="1"/>
</dbReference>
<dbReference type="PROSITE" id="PS00301">
    <property type="entry name" value="G_TR_1"/>
    <property type="match status" value="1"/>
</dbReference>
<dbReference type="PROSITE" id="PS51722">
    <property type="entry name" value="G_TR_2"/>
    <property type="match status" value="1"/>
</dbReference>
<protein>
    <recommendedName>
        <fullName evidence="1">Elongation factor 4</fullName>
        <shortName evidence="1">EF-4</shortName>
        <ecNumber evidence="1">3.6.5.n1</ecNumber>
    </recommendedName>
    <alternativeName>
        <fullName evidence="1">Ribosomal back-translocase LepA</fullName>
    </alternativeName>
</protein>
<reference key="1">
    <citation type="journal article" date="2010" name="Genome Biol. Evol.">
        <title>Continuing evolution of Burkholderia mallei through genome reduction and large-scale rearrangements.</title>
        <authorList>
            <person name="Losada L."/>
            <person name="Ronning C.M."/>
            <person name="DeShazer D."/>
            <person name="Woods D."/>
            <person name="Fedorova N."/>
            <person name="Kim H.S."/>
            <person name="Shabalina S.A."/>
            <person name="Pearson T.R."/>
            <person name="Brinkac L."/>
            <person name="Tan P."/>
            <person name="Nandi T."/>
            <person name="Crabtree J."/>
            <person name="Badger J."/>
            <person name="Beckstrom-Sternberg S."/>
            <person name="Saqib M."/>
            <person name="Schutzer S.E."/>
            <person name="Keim P."/>
            <person name="Nierman W.C."/>
        </authorList>
    </citation>
    <scope>NUCLEOTIDE SEQUENCE [LARGE SCALE GENOMIC DNA]</scope>
    <source>
        <strain>SAVP1</strain>
    </source>
</reference>
<gene>
    <name evidence="1" type="primary">lepA</name>
    <name type="ordered locus">BMASAVP1_A2468</name>
</gene>
<organism>
    <name type="scientific">Burkholderia mallei (strain SAVP1)</name>
    <dbReference type="NCBI Taxonomy" id="320388"/>
    <lineage>
        <taxon>Bacteria</taxon>
        <taxon>Pseudomonadati</taxon>
        <taxon>Pseudomonadota</taxon>
        <taxon>Betaproteobacteria</taxon>
        <taxon>Burkholderiales</taxon>
        <taxon>Burkholderiaceae</taxon>
        <taxon>Burkholderia</taxon>
        <taxon>pseudomallei group</taxon>
    </lineage>
</organism>
<proteinExistence type="inferred from homology"/>